<proteinExistence type="inferred from homology"/>
<reference key="1">
    <citation type="journal article" date="2008" name="J. Bacteriol.">
        <title>Comparative genome sequence analysis of multidrug-resistant Acinetobacter baumannii.</title>
        <authorList>
            <person name="Adams M.D."/>
            <person name="Goglin K."/>
            <person name="Molyneaux N."/>
            <person name="Hujer K.M."/>
            <person name="Lavender H."/>
            <person name="Jamison J.J."/>
            <person name="MacDonald I.J."/>
            <person name="Martin K.M."/>
            <person name="Russo T."/>
            <person name="Campagnari A.A."/>
            <person name="Hujer A.M."/>
            <person name="Bonomo R.A."/>
            <person name="Gill S.R."/>
        </authorList>
    </citation>
    <scope>NUCLEOTIDE SEQUENCE [LARGE SCALE GENOMIC DNA]</scope>
    <source>
        <strain>AB307-0294</strain>
    </source>
</reference>
<evidence type="ECO:0000255" key="1">
    <source>
        <dbReference type="HAMAP-Rule" id="MF_00501"/>
    </source>
</evidence>
<evidence type="ECO:0000305" key="2"/>
<accession>B7GZ34</accession>
<gene>
    <name evidence="1" type="primary">rpmE</name>
    <name type="ordered locus">ABBFA_001031</name>
</gene>
<comment type="function">
    <text evidence="1">Binds the 23S rRNA.</text>
</comment>
<comment type="cofactor">
    <cofactor evidence="1">
        <name>Zn(2+)</name>
        <dbReference type="ChEBI" id="CHEBI:29105"/>
    </cofactor>
    <text evidence="1">Binds 1 zinc ion per subunit.</text>
</comment>
<comment type="subunit">
    <text evidence="1">Part of the 50S ribosomal subunit.</text>
</comment>
<comment type="similarity">
    <text evidence="1">Belongs to the bacterial ribosomal protein bL31 family. Type A subfamily.</text>
</comment>
<dbReference type="EMBL" id="CP001172">
    <property type="protein sequence ID" value="ACJ58225.1"/>
    <property type="molecule type" value="Genomic_DNA"/>
</dbReference>
<dbReference type="RefSeq" id="WP_001200845.1">
    <property type="nucleotide sequence ID" value="NZ_CP001172.1"/>
</dbReference>
<dbReference type="SMR" id="B7GZ34"/>
<dbReference type="GeneID" id="92894731"/>
<dbReference type="HOGENOM" id="CLU_114306_4_3_6"/>
<dbReference type="Proteomes" id="UP000006924">
    <property type="component" value="Chromosome"/>
</dbReference>
<dbReference type="GO" id="GO:1990904">
    <property type="term" value="C:ribonucleoprotein complex"/>
    <property type="evidence" value="ECO:0007669"/>
    <property type="project" value="UniProtKB-KW"/>
</dbReference>
<dbReference type="GO" id="GO:0005840">
    <property type="term" value="C:ribosome"/>
    <property type="evidence" value="ECO:0007669"/>
    <property type="project" value="UniProtKB-KW"/>
</dbReference>
<dbReference type="GO" id="GO:0046872">
    <property type="term" value="F:metal ion binding"/>
    <property type="evidence" value="ECO:0007669"/>
    <property type="project" value="UniProtKB-KW"/>
</dbReference>
<dbReference type="GO" id="GO:0019843">
    <property type="term" value="F:rRNA binding"/>
    <property type="evidence" value="ECO:0007669"/>
    <property type="project" value="UniProtKB-KW"/>
</dbReference>
<dbReference type="GO" id="GO:0003735">
    <property type="term" value="F:structural constituent of ribosome"/>
    <property type="evidence" value="ECO:0007669"/>
    <property type="project" value="InterPro"/>
</dbReference>
<dbReference type="GO" id="GO:0006412">
    <property type="term" value="P:translation"/>
    <property type="evidence" value="ECO:0007669"/>
    <property type="project" value="UniProtKB-UniRule"/>
</dbReference>
<dbReference type="Gene3D" id="4.10.830.30">
    <property type="entry name" value="Ribosomal protein L31"/>
    <property type="match status" value="1"/>
</dbReference>
<dbReference type="HAMAP" id="MF_00501">
    <property type="entry name" value="Ribosomal_bL31_1"/>
    <property type="match status" value="1"/>
</dbReference>
<dbReference type="InterPro" id="IPR034704">
    <property type="entry name" value="Ribosomal_bL28/bL31-like_sf"/>
</dbReference>
<dbReference type="InterPro" id="IPR002150">
    <property type="entry name" value="Ribosomal_bL31"/>
</dbReference>
<dbReference type="InterPro" id="IPR027491">
    <property type="entry name" value="Ribosomal_bL31_A"/>
</dbReference>
<dbReference type="InterPro" id="IPR042105">
    <property type="entry name" value="Ribosomal_bL31_sf"/>
</dbReference>
<dbReference type="NCBIfam" id="TIGR00105">
    <property type="entry name" value="L31"/>
    <property type="match status" value="1"/>
</dbReference>
<dbReference type="NCBIfam" id="NF000612">
    <property type="entry name" value="PRK00019.1"/>
    <property type="match status" value="1"/>
</dbReference>
<dbReference type="NCBIfam" id="NF001809">
    <property type="entry name" value="PRK00528.1"/>
    <property type="match status" value="1"/>
</dbReference>
<dbReference type="PANTHER" id="PTHR33280">
    <property type="entry name" value="50S RIBOSOMAL PROTEIN L31, CHLOROPLASTIC"/>
    <property type="match status" value="1"/>
</dbReference>
<dbReference type="PANTHER" id="PTHR33280:SF6">
    <property type="entry name" value="LARGE RIBOSOMAL SUBUNIT PROTEIN BL31A"/>
    <property type="match status" value="1"/>
</dbReference>
<dbReference type="Pfam" id="PF01197">
    <property type="entry name" value="Ribosomal_L31"/>
    <property type="match status" value="1"/>
</dbReference>
<dbReference type="PRINTS" id="PR01249">
    <property type="entry name" value="RIBOSOMALL31"/>
</dbReference>
<dbReference type="SUPFAM" id="SSF143800">
    <property type="entry name" value="L28p-like"/>
    <property type="match status" value="1"/>
</dbReference>
<dbReference type="PROSITE" id="PS01143">
    <property type="entry name" value="RIBOSOMAL_L31"/>
    <property type="match status" value="1"/>
</dbReference>
<feature type="chain" id="PRO_1000126541" description="Large ribosomal subunit protein bL31">
    <location>
        <begin position="1"/>
        <end position="74"/>
    </location>
</feature>
<feature type="binding site" evidence="1">
    <location>
        <position position="16"/>
    </location>
    <ligand>
        <name>Zn(2+)</name>
        <dbReference type="ChEBI" id="CHEBI:29105"/>
    </ligand>
</feature>
<feature type="binding site" evidence="1">
    <location>
        <position position="18"/>
    </location>
    <ligand>
        <name>Zn(2+)</name>
        <dbReference type="ChEBI" id="CHEBI:29105"/>
    </ligand>
</feature>
<feature type="binding site" evidence="1">
    <location>
        <position position="38"/>
    </location>
    <ligand>
        <name>Zn(2+)</name>
        <dbReference type="ChEBI" id="CHEBI:29105"/>
    </ligand>
</feature>
<feature type="binding site" evidence="1">
    <location>
        <position position="41"/>
    </location>
    <ligand>
        <name>Zn(2+)</name>
        <dbReference type="ChEBI" id="CHEBI:29105"/>
    </ligand>
</feature>
<keyword id="KW-0479">Metal-binding</keyword>
<keyword id="KW-0687">Ribonucleoprotein</keyword>
<keyword id="KW-0689">Ribosomal protein</keyword>
<keyword id="KW-0694">RNA-binding</keyword>
<keyword id="KW-0699">rRNA-binding</keyword>
<keyword id="KW-0862">Zinc</keyword>
<sequence length="74" mass="8328">MRADIHPKYEKLVATCSCGNVIETRSALGKETIYLDVCSACHPFYTGKQKNVDTGGRIDKFKQRFAGMSRSIKR</sequence>
<name>RL31_ACIB3</name>
<protein>
    <recommendedName>
        <fullName evidence="1">Large ribosomal subunit protein bL31</fullName>
    </recommendedName>
    <alternativeName>
        <fullName evidence="2">50S ribosomal protein L31</fullName>
    </alternativeName>
</protein>
<organism>
    <name type="scientific">Acinetobacter baumannii (strain AB307-0294)</name>
    <dbReference type="NCBI Taxonomy" id="557600"/>
    <lineage>
        <taxon>Bacteria</taxon>
        <taxon>Pseudomonadati</taxon>
        <taxon>Pseudomonadota</taxon>
        <taxon>Gammaproteobacteria</taxon>
        <taxon>Moraxellales</taxon>
        <taxon>Moraxellaceae</taxon>
        <taxon>Acinetobacter</taxon>
        <taxon>Acinetobacter calcoaceticus/baumannii complex</taxon>
    </lineage>
</organism>